<name>PCT2B_RAT</name>
<organism>
    <name type="scientific">Rattus norvegicus</name>
    <name type="common">Rat</name>
    <dbReference type="NCBI Taxonomy" id="10116"/>
    <lineage>
        <taxon>Eukaryota</taxon>
        <taxon>Metazoa</taxon>
        <taxon>Chordata</taxon>
        <taxon>Craniata</taxon>
        <taxon>Vertebrata</taxon>
        <taxon>Euteleostomi</taxon>
        <taxon>Mammalia</taxon>
        <taxon>Eutheria</taxon>
        <taxon>Euarchontoglires</taxon>
        <taxon>Glires</taxon>
        <taxon>Rodentia</taxon>
        <taxon>Myomorpha</taxon>
        <taxon>Muroidea</taxon>
        <taxon>Muridae</taxon>
        <taxon>Murinae</taxon>
        <taxon>Rattus</taxon>
    </lineage>
</organism>
<accession>Q4V8A1</accession>
<gene>
    <name type="primary">Lpcat2b</name>
    <name type="synonym">Aytl1b</name>
</gene>
<comment type="function">
    <text evidence="1">Probable acetyltransferase.</text>
</comment>
<comment type="pathway">
    <text>Lipid metabolism; phospholipid metabolism.</text>
</comment>
<comment type="subcellular location">
    <subcellularLocation>
        <location evidence="4">Membrane</location>
        <topology evidence="4">Multi-pass membrane protein</topology>
    </subcellularLocation>
</comment>
<comment type="domain">
    <text evidence="1">The HXXXXD motif is essential for acyltransferase activity.</text>
</comment>
<comment type="similarity">
    <text evidence="4">Belongs to the 1-acyl-sn-glycerol-3-phosphate acyltransferase family.</text>
</comment>
<evidence type="ECO:0000250" key="1"/>
<evidence type="ECO:0000255" key="2"/>
<evidence type="ECO:0000255" key="3">
    <source>
        <dbReference type="PROSITE-ProRule" id="PRU00448"/>
    </source>
</evidence>
<evidence type="ECO:0000305" key="4"/>
<proteinExistence type="evidence at transcript level"/>
<reference key="1">
    <citation type="journal article" date="2004" name="Genome Res.">
        <title>The status, quality, and expansion of the NIH full-length cDNA project: the Mammalian Gene Collection (MGC).</title>
        <authorList>
            <consortium name="The MGC Project Team"/>
        </authorList>
    </citation>
    <scope>NUCLEOTIDE SEQUENCE [LARGE SCALE MRNA]</scope>
    <source>
        <tissue>Testis</tissue>
    </source>
</reference>
<dbReference type="EC" id="2.3.1.-"/>
<dbReference type="EMBL" id="BC097476">
    <property type="protein sequence ID" value="AAH97476.1"/>
    <property type="molecule type" value="mRNA"/>
</dbReference>
<dbReference type="RefSeq" id="NP_001020802.1">
    <property type="nucleotide sequence ID" value="NM_001025631.1"/>
</dbReference>
<dbReference type="SMR" id="Q4V8A1"/>
<dbReference type="FunCoup" id="Q4V8A1">
    <property type="interactions" value="98"/>
</dbReference>
<dbReference type="STRING" id="10116.ENSRNOP00000074601"/>
<dbReference type="GlyCosmos" id="Q4V8A1">
    <property type="glycosylation" value="1 site, No reported glycans"/>
</dbReference>
<dbReference type="GlyGen" id="Q4V8A1">
    <property type="glycosylation" value="2 sites"/>
</dbReference>
<dbReference type="jPOST" id="Q4V8A1"/>
<dbReference type="PaxDb" id="10116-ENSRNOP00000044422"/>
<dbReference type="Ensembl" id="ENSRNOT00000080875.2">
    <property type="protein sequence ID" value="ENSRNOP00000074601.1"/>
    <property type="gene ID" value="ENSRNOG00000055849.2"/>
</dbReference>
<dbReference type="Ensembl" id="ENSRNOT00000096698.1">
    <property type="protein sequence ID" value="ENSRNOP00000089831.1"/>
    <property type="gene ID" value="ENSRNOG00000055849.2"/>
</dbReference>
<dbReference type="GeneID" id="289439"/>
<dbReference type="KEGG" id="rno:289439"/>
<dbReference type="UCSC" id="RGD:1310837">
    <property type="organism name" value="rat"/>
</dbReference>
<dbReference type="AGR" id="RGD:1310837"/>
<dbReference type="CTD" id="70902"/>
<dbReference type="RGD" id="1310837">
    <property type="gene designation" value="Lpcat2b"/>
</dbReference>
<dbReference type="eggNOG" id="KOG4666">
    <property type="taxonomic scope" value="Eukaryota"/>
</dbReference>
<dbReference type="GeneTree" id="ENSGT01030000234574"/>
<dbReference type="HOGENOM" id="CLU_025017_0_0_1"/>
<dbReference type="InParanoid" id="Q4V8A1"/>
<dbReference type="OMA" id="HISAWRW"/>
<dbReference type="OrthoDB" id="272512at2759"/>
<dbReference type="PhylomeDB" id="Q4V8A1"/>
<dbReference type="UniPathway" id="UPA00085"/>
<dbReference type="PRO" id="PR:Q4V8A1"/>
<dbReference type="Proteomes" id="UP000002494">
    <property type="component" value="Chromosome 14"/>
</dbReference>
<dbReference type="Bgee" id="ENSRNOG00000055849">
    <property type="expression patterns" value="Expressed in testis and 3 other cell types or tissues"/>
</dbReference>
<dbReference type="GO" id="GO:0005783">
    <property type="term" value="C:endoplasmic reticulum"/>
    <property type="evidence" value="ECO:0000318"/>
    <property type="project" value="GO_Central"/>
</dbReference>
<dbReference type="GO" id="GO:0016020">
    <property type="term" value="C:membrane"/>
    <property type="evidence" value="ECO:0007669"/>
    <property type="project" value="UniProtKB-SubCell"/>
</dbReference>
<dbReference type="GO" id="GO:0047184">
    <property type="term" value="F:1-acylglycerophosphocholine O-acyltransferase activity"/>
    <property type="evidence" value="ECO:0007669"/>
    <property type="project" value="UniProtKB-ARBA"/>
</dbReference>
<dbReference type="GO" id="GO:0005509">
    <property type="term" value="F:calcium ion binding"/>
    <property type="evidence" value="ECO:0007669"/>
    <property type="project" value="InterPro"/>
</dbReference>
<dbReference type="GO" id="GO:0042171">
    <property type="term" value="F:lysophosphatidic acid acyltransferase activity"/>
    <property type="evidence" value="ECO:0000318"/>
    <property type="project" value="GO_Central"/>
</dbReference>
<dbReference type="GO" id="GO:0008654">
    <property type="term" value="P:phospholipid biosynthetic process"/>
    <property type="evidence" value="ECO:0007669"/>
    <property type="project" value="UniProtKB-KW"/>
</dbReference>
<dbReference type="CDD" id="cd00051">
    <property type="entry name" value="EFh"/>
    <property type="match status" value="1"/>
</dbReference>
<dbReference type="CDD" id="cd07991">
    <property type="entry name" value="LPLAT_LPCAT1-like"/>
    <property type="match status" value="1"/>
</dbReference>
<dbReference type="Gene3D" id="1.10.238.10">
    <property type="entry name" value="EF-hand"/>
    <property type="match status" value="1"/>
</dbReference>
<dbReference type="InterPro" id="IPR011992">
    <property type="entry name" value="EF-hand-dom_pair"/>
</dbReference>
<dbReference type="InterPro" id="IPR018247">
    <property type="entry name" value="EF_Hand_1_Ca_BS"/>
</dbReference>
<dbReference type="InterPro" id="IPR002048">
    <property type="entry name" value="EF_hand_dom"/>
</dbReference>
<dbReference type="InterPro" id="IPR045252">
    <property type="entry name" value="LPCAT1-like"/>
</dbReference>
<dbReference type="InterPro" id="IPR002123">
    <property type="entry name" value="Plipid/glycerol_acylTrfase"/>
</dbReference>
<dbReference type="PANTHER" id="PTHR23063:SF13">
    <property type="entry name" value="LYSOPHOSPHATIDYLCHOLINE ACYLTRANSFERASE 2B"/>
    <property type="match status" value="1"/>
</dbReference>
<dbReference type="PANTHER" id="PTHR23063">
    <property type="entry name" value="PHOSPHOLIPID ACYLTRANSFERASE"/>
    <property type="match status" value="1"/>
</dbReference>
<dbReference type="Pfam" id="PF01553">
    <property type="entry name" value="Acyltransferase"/>
    <property type="match status" value="1"/>
</dbReference>
<dbReference type="Pfam" id="PF00036">
    <property type="entry name" value="EF-hand_1"/>
    <property type="match status" value="1"/>
</dbReference>
<dbReference type="Pfam" id="PF13202">
    <property type="entry name" value="EF-hand_5"/>
    <property type="match status" value="1"/>
</dbReference>
<dbReference type="PRINTS" id="PR00450">
    <property type="entry name" value="RECOVERIN"/>
</dbReference>
<dbReference type="SMART" id="SM00054">
    <property type="entry name" value="EFh"/>
    <property type="match status" value="2"/>
</dbReference>
<dbReference type="SMART" id="SM00563">
    <property type="entry name" value="PlsC"/>
    <property type="match status" value="1"/>
</dbReference>
<dbReference type="SUPFAM" id="SSF47473">
    <property type="entry name" value="EF-hand"/>
    <property type="match status" value="1"/>
</dbReference>
<dbReference type="SUPFAM" id="SSF69593">
    <property type="entry name" value="Glycerol-3-phosphate (1)-acyltransferase"/>
    <property type="match status" value="1"/>
</dbReference>
<dbReference type="PROSITE" id="PS00018">
    <property type="entry name" value="EF_HAND_1"/>
    <property type="match status" value="2"/>
</dbReference>
<dbReference type="PROSITE" id="PS50222">
    <property type="entry name" value="EF_HAND_2"/>
    <property type="match status" value="2"/>
</dbReference>
<protein>
    <recommendedName>
        <fullName>Lysophosphatidylcholine acyltransferase 2B</fullName>
        <ecNumber>2.3.1.-</ecNumber>
    </recommendedName>
    <alternativeName>
        <fullName>Acyltransferase-like 1-B</fullName>
    </alternativeName>
</protein>
<sequence length="517" mass="58563">MAHQTQRRDTADTMTEVEVWDSRTAQEVNKSLYPPAVTNPFTHHTQLSAWQLACSIFLGTVLVPVRVSCIVFLFLLLWPVALLSTINLPIQPTEPVKSWRKHLIKPVFIFLLRLAFFCAGFLIKVKGKKATREEAPIFVVAPHSTFFDAIAVIVAGLPSVVSDTQHVRIPLVGQCILLTQPVLVRREDPNSRKTTRNEILSRVKSKMKWPQILIFPEGLCTNRSCLVTFKLGAFSPGVPVQPVLLRYPNTLDTVTWTWHGFSGFQVCMLTLSQPFTRMEVEFMPVYIPNEDEKKDPILFANTVRINMANALKLPVTDHSFEDCKLMISAGALRLPMEAGLVEFTKISQKLKLDWDNIHTHLDKYASVAVSSKGGKIGIEEFSRYLKLPISEPLRQLFSLFDRNQDGTIDFREYVIGLTVLCNPANTEKILQMSFKLFDLDEDGYITEQELTTMLRAAFGVPDLDVSTLFQQMAGKDSAQVSYRTFRRFALKHPAYAKLFHSYIDLQAAYIYSLPGEV</sequence>
<keyword id="KW-0012">Acyltransferase</keyword>
<keyword id="KW-0106">Calcium</keyword>
<keyword id="KW-0325">Glycoprotein</keyword>
<keyword id="KW-0444">Lipid biosynthesis</keyword>
<keyword id="KW-0443">Lipid metabolism</keyword>
<keyword id="KW-0472">Membrane</keyword>
<keyword id="KW-0479">Metal-binding</keyword>
<keyword id="KW-0594">Phospholipid biosynthesis</keyword>
<keyword id="KW-1208">Phospholipid metabolism</keyword>
<keyword id="KW-1185">Reference proteome</keyword>
<keyword id="KW-0677">Repeat</keyword>
<keyword id="KW-0808">Transferase</keyword>
<keyword id="KW-0812">Transmembrane</keyword>
<keyword id="KW-1133">Transmembrane helix</keyword>
<feature type="chain" id="PRO_0000247062" description="Lysophosphatidylcholine acyltransferase 2B">
    <location>
        <begin position="1"/>
        <end position="517"/>
    </location>
</feature>
<feature type="transmembrane region" description="Helical" evidence="2">
    <location>
        <begin position="70"/>
        <end position="90"/>
    </location>
</feature>
<feature type="transmembrane region" description="Helical" evidence="2">
    <location>
        <begin position="103"/>
        <end position="123"/>
    </location>
</feature>
<feature type="transmembrane region" description="Helical" evidence="2">
    <location>
        <begin position="137"/>
        <end position="157"/>
    </location>
</feature>
<feature type="domain" description="EF-hand 1" evidence="3">
    <location>
        <begin position="388"/>
        <end position="423"/>
    </location>
</feature>
<feature type="domain" description="EF-hand 2" evidence="3">
    <location>
        <begin position="425"/>
        <end position="460"/>
    </location>
</feature>
<feature type="short sequence motif" description="HXXXXD motif">
    <location>
        <begin position="143"/>
        <end position="148"/>
    </location>
</feature>
<feature type="binding site" evidence="3">
    <location>
        <position position="401"/>
    </location>
    <ligand>
        <name>Ca(2+)</name>
        <dbReference type="ChEBI" id="CHEBI:29108"/>
        <label>1</label>
    </ligand>
</feature>
<feature type="binding site" evidence="3">
    <location>
        <position position="403"/>
    </location>
    <ligand>
        <name>Ca(2+)</name>
        <dbReference type="ChEBI" id="CHEBI:29108"/>
        <label>1</label>
    </ligand>
</feature>
<feature type="binding site" evidence="3">
    <location>
        <position position="405"/>
    </location>
    <ligand>
        <name>Ca(2+)</name>
        <dbReference type="ChEBI" id="CHEBI:29108"/>
        <label>1</label>
    </ligand>
</feature>
<feature type="binding site" evidence="3">
    <location>
        <position position="407"/>
    </location>
    <ligand>
        <name>Ca(2+)</name>
        <dbReference type="ChEBI" id="CHEBI:29108"/>
        <label>1</label>
    </ligand>
</feature>
<feature type="binding site" evidence="3">
    <location>
        <position position="412"/>
    </location>
    <ligand>
        <name>Ca(2+)</name>
        <dbReference type="ChEBI" id="CHEBI:29108"/>
        <label>1</label>
    </ligand>
</feature>
<feature type="binding site" evidence="3">
    <location>
        <position position="438"/>
    </location>
    <ligand>
        <name>Ca(2+)</name>
        <dbReference type="ChEBI" id="CHEBI:29108"/>
        <label>2</label>
    </ligand>
</feature>
<feature type="binding site" evidence="3">
    <location>
        <position position="440"/>
    </location>
    <ligand>
        <name>Ca(2+)</name>
        <dbReference type="ChEBI" id="CHEBI:29108"/>
        <label>2</label>
    </ligand>
</feature>
<feature type="binding site" evidence="3">
    <location>
        <position position="442"/>
    </location>
    <ligand>
        <name>Ca(2+)</name>
        <dbReference type="ChEBI" id="CHEBI:29108"/>
        <label>2</label>
    </ligand>
</feature>
<feature type="binding site" evidence="3">
    <location>
        <position position="444"/>
    </location>
    <ligand>
        <name>Ca(2+)</name>
        <dbReference type="ChEBI" id="CHEBI:29108"/>
        <label>2</label>
    </ligand>
</feature>
<feature type="binding site" evidence="3">
    <location>
        <position position="449"/>
    </location>
    <ligand>
        <name>Ca(2+)</name>
        <dbReference type="ChEBI" id="CHEBI:29108"/>
        <label>2</label>
    </ligand>
</feature>
<feature type="glycosylation site" description="N-linked (GlcNAc...) asparagine" evidence="2">
    <location>
        <position position="29"/>
    </location>
</feature>